<evidence type="ECO:0000255" key="1"/>
<evidence type="ECO:0000255" key="2">
    <source>
        <dbReference type="PROSITE-ProRule" id="PRU00297"/>
    </source>
</evidence>
<evidence type="ECO:0000255" key="3">
    <source>
        <dbReference type="PROSITE-ProRule" id="PRU10012"/>
    </source>
</evidence>
<protein>
    <recommendedName>
        <fullName>Suberization-associated anionic peroxidase</fullName>
        <ecNumber>1.11.1.7</ecNumber>
    </recommendedName>
    <alternativeName>
        <fullName>POPA</fullName>
    </alternativeName>
</protein>
<name>PERX_SOLTU</name>
<accession>P12437</accession>
<feature type="signal peptide" evidence="1">
    <location>
        <begin position="1"/>
        <end position="20"/>
    </location>
</feature>
<feature type="chain" id="PRO_0000055611" description="Suberization-associated anionic peroxidase">
    <location>
        <begin position="21"/>
        <end position="363"/>
    </location>
</feature>
<feature type="active site" description="Proton acceptor" evidence="2 3">
    <location>
        <position position="109"/>
    </location>
</feature>
<feature type="binding site" evidence="2">
    <location>
        <position position="110"/>
    </location>
    <ligand>
        <name>Ca(2+)</name>
        <dbReference type="ChEBI" id="CHEBI:29108"/>
        <label>1</label>
    </ligand>
</feature>
<feature type="binding site" evidence="2">
    <location>
        <position position="113"/>
    </location>
    <ligand>
        <name>Ca(2+)</name>
        <dbReference type="ChEBI" id="CHEBI:29108"/>
        <label>1</label>
    </ligand>
</feature>
<feature type="binding site" evidence="2">
    <location>
        <position position="115"/>
    </location>
    <ligand>
        <name>Ca(2+)</name>
        <dbReference type="ChEBI" id="CHEBI:29108"/>
        <label>1</label>
    </ligand>
</feature>
<feature type="binding site" evidence="2">
    <location>
        <position position="117"/>
    </location>
    <ligand>
        <name>Ca(2+)</name>
        <dbReference type="ChEBI" id="CHEBI:29108"/>
        <label>1</label>
    </ligand>
</feature>
<feature type="binding site" evidence="2">
    <location>
        <position position="208"/>
    </location>
    <ligand>
        <name>substrate</name>
    </ligand>
</feature>
<feature type="binding site" description="axial binding residue" evidence="2">
    <location>
        <position position="238"/>
    </location>
    <ligand>
        <name>heme b</name>
        <dbReference type="ChEBI" id="CHEBI:60344"/>
    </ligand>
    <ligandPart>
        <name>Fe</name>
        <dbReference type="ChEBI" id="CHEBI:18248"/>
    </ligandPart>
</feature>
<feature type="binding site" evidence="2">
    <location>
        <position position="239"/>
    </location>
    <ligand>
        <name>Ca(2+)</name>
        <dbReference type="ChEBI" id="CHEBI:29108"/>
        <label>2</label>
    </ligand>
</feature>
<feature type="binding site" evidence="2">
    <location>
        <position position="277"/>
    </location>
    <ligand>
        <name>Ca(2+)</name>
        <dbReference type="ChEBI" id="CHEBI:29108"/>
        <label>2</label>
    </ligand>
</feature>
<feature type="binding site" evidence="2">
    <location>
        <position position="279"/>
    </location>
    <ligand>
        <name>Ca(2+)</name>
        <dbReference type="ChEBI" id="CHEBI:29108"/>
        <label>2</label>
    </ligand>
</feature>
<feature type="binding site" evidence="2">
    <location>
        <position position="284"/>
    </location>
    <ligand>
        <name>Ca(2+)</name>
        <dbReference type="ChEBI" id="CHEBI:29108"/>
        <label>2</label>
    </ligand>
</feature>
<feature type="site" description="Transition state stabilizer" evidence="2">
    <location>
        <position position="105"/>
    </location>
</feature>
<feature type="glycosylation site" description="N-linked (GlcNAc...) asparagine" evidence="1">
    <location>
        <position position="36"/>
    </location>
</feature>
<feature type="glycosylation site" description="N-linked (GlcNAc...) asparagine" evidence="1">
    <location>
        <position position="126"/>
    </location>
</feature>
<feature type="glycosylation site" description="N-linked (GlcNAc...) asparagine" evidence="1">
    <location>
        <position position="161"/>
    </location>
</feature>
<feature type="glycosylation site" description="N-linked (GlcNAc...) asparagine" evidence="1">
    <location>
        <position position="199"/>
    </location>
</feature>
<feature type="glycosylation site" description="N-linked (GlcNAc...) asparagine" evidence="1">
    <location>
        <position position="213"/>
    </location>
</feature>
<feature type="glycosylation site" description="N-linked (GlcNAc...) asparagine" evidence="1">
    <location>
        <position position="225"/>
    </location>
</feature>
<feature type="glycosylation site" description="N-linked (GlcNAc...) asparagine" evidence="1">
    <location>
        <position position="263"/>
    </location>
</feature>
<feature type="disulfide bond" evidence="2">
    <location>
        <begin position="80"/>
        <end position="159"/>
    </location>
</feature>
<feature type="disulfide bond" evidence="2">
    <location>
        <begin position="111"/>
        <end position="116"/>
    </location>
</feature>
<feature type="disulfide bond" evidence="2">
    <location>
        <begin position="166"/>
        <end position="352"/>
    </location>
</feature>
<feature type="disulfide bond" evidence="2">
    <location>
        <begin position="245"/>
        <end position="264"/>
    </location>
</feature>
<proteinExistence type="evidence at transcript level"/>
<dbReference type="EC" id="1.11.1.7"/>
<dbReference type="EMBL" id="M21334">
    <property type="protein sequence ID" value="AAA33837.1"/>
    <property type="molecule type" value="mRNA"/>
</dbReference>
<dbReference type="PIR" id="S07407">
    <property type="entry name" value="S07407"/>
</dbReference>
<dbReference type="SMR" id="P12437"/>
<dbReference type="STRING" id="4113.P12437"/>
<dbReference type="PeroxiBase" id="152">
    <property type="entry name" value="StPrx72"/>
</dbReference>
<dbReference type="PaxDb" id="4113-PGSC0003DMT400057522"/>
<dbReference type="ProMEX" id="P12437"/>
<dbReference type="EnsemblPlants" id="RHC02H1G1812.2.1">
    <property type="protein sequence ID" value="RHC02H1G1812.2.1"/>
    <property type="gene ID" value="RHC02H1G1812.2"/>
</dbReference>
<dbReference type="Gramene" id="RHC02H1G1812.2.1">
    <property type="protein sequence ID" value="RHC02H1G1812.2.1"/>
    <property type="gene ID" value="RHC02H1G1812.2"/>
</dbReference>
<dbReference type="eggNOG" id="ENOG502QU1K">
    <property type="taxonomic scope" value="Eukaryota"/>
</dbReference>
<dbReference type="InParanoid" id="P12437"/>
<dbReference type="Proteomes" id="UP000011115">
    <property type="component" value="Unassembled WGS sequence"/>
</dbReference>
<dbReference type="GO" id="GO:0005576">
    <property type="term" value="C:extracellular region"/>
    <property type="evidence" value="ECO:0007669"/>
    <property type="project" value="UniProtKB-SubCell"/>
</dbReference>
<dbReference type="GO" id="GO:0020037">
    <property type="term" value="F:heme binding"/>
    <property type="evidence" value="ECO:0007669"/>
    <property type="project" value="InterPro"/>
</dbReference>
<dbReference type="GO" id="GO:0140825">
    <property type="term" value="F:lactoperoxidase activity"/>
    <property type="evidence" value="ECO:0007669"/>
    <property type="project" value="UniProtKB-EC"/>
</dbReference>
<dbReference type="GO" id="GO:0046872">
    <property type="term" value="F:metal ion binding"/>
    <property type="evidence" value="ECO:0007669"/>
    <property type="project" value="UniProtKB-KW"/>
</dbReference>
<dbReference type="GO" id="GO:0042744">
    <property type="term" value="P:hydrogen peroxide catabolic process"/>
    <property type="evidence" value="ECO:0007669"/>
    <property type="project" value="UniProtKB-KW"/>
</dbReference>
<dbReference type="GO" id="GO:0006979">
    <property type="term" value="P:response to oxidative stress"/>
    <property type="evidence" value="ECO:0007669"/>
    <property type="project" value="InterPro"/>
</dbReference>
<dbReference type="CDD" id="cd00693">
    <property type="entry name" value="secretory_peroxidase"/>
    <property type="match status" value="1"/>
</dbReference>
<dbReference type="FunFam" id="1.10.420.10:FF:000001">
    <property type="entry name" value="Peroxidase"/>
    <property type="match status" value="1"/>
</dbReference>
<dbReference type="Gene3D" id="1.10.520.10">
    <property type="match status" value="1"/>
</dbReference>
<dbReference type="Gene3D" id="1.10.420.10">
    <property type="entry name" value="Peroxidase, domain 2"/>
    <property type="match status" value="1"/>
</dbReference>
<dbReference type="InterPro" id="IPR002016">
    <property type="entry name" value="Haem_peroxidase"/>
</dbReference>
<dbReference type="InterPro" id="IPR010255">
    <property type="entry name" value="Haem_peroxidase_sf"/>
</dbReference>
<dbReference type="InterPro" id="IPR000823">
    <property type="entry name" value="Peroxidase_pln"/>
</dbReference>
<dbReference type="InterPro" id="IPR019794">
    <property type="entry name" value="Peroxidases_AS"/>
</dbReference>
<dbReference type="InterPro" id="IPR019793">
    <property type="entry name" value="Peroxidases_heam-ligand_BS"/>
</dbReference>
<dbReference type="InterPro" id="IPR033905">
    <property type="entry name" value="Secretory_peroxidase"/>
</dbReference>
<dbReference type="PANTHER" id="PTHR31388:SF264">
    <property type="entry name" value="PEROXIDASE 59"/>
    <property type="match status" value="1"/>
</dbReference>
<dbReference type="PANTHER" id="PTHR31388">
    <property type="entry name" value="PEROXIDASE 72-RELATED"/>
    <property type="match status" value="1"/>
</dbReference>
<dbReference type="Pfam" id="PF00141">
    <property type="entry name" value="peroxidase"/>
    <property type="match status" value="1"/>
</dbReference>
<dbReference type="PRINTS" id="PR00458">
    <property type="entry name" value="PEROXIDASE"/>
</dbReference>
<dbReference type="PRINTS" id="PR00461">
    <property type="entry name" value="PLPEROXIDASE"/>
</dbReference>
<dbReference type="SUPFAM" id="SSF48113">
    <property type="entry name" value="Heme-dependent peroxidases"/>
    <property type="match status" value="1"/>
</dbReference>
<dbReference type="PROSITE" id="PS00435">
    <property type="entry name" value="PEROXIDASE_1"/>
    <property type="match status" value="1"/>
</dbReference>
<dbReference type="PROSITE" id="PS00436">
    <property type="entry name" value="PEROXIDASE_2"/>
    <property type="match status" value="1"/>
</dbReference>
<dbReference type="PROSITE" id="PS50873">
    <property type="entry name" value="PEROXIDASE_4"/>
    <property type="match status" value="1"/>
</dbReference>
<organism>
    <name type="scientific">Solanum tuberosum</name>
    <name type="common">Potato</name>
    <dbReference type="NCBI Taxonomy" id="4113"/>
    <lineage>
        <taxon>Eukaryota</taxon>
        <taxon>Viridiplantae</taxon>
        <taxon>Streptophyta</taxon>
        <taxon>Embryophyta</taxon>
        <taxon>Tracheophyta</taxon>
        <taxon>Spermatophyta</taxon>
        <taxon>Magnoliopsida</taxon>
        <taxon>eudicotyledons</taxon>
        <taxon>Gunneridae</taxon>
        <taxon>Pentapetalae</taxon>
        <taxon>asterids</taxon>
        <taxon>lamiids</taxon>
        <taxon>Solanales</taxon>
        <taxon>Solanaceae</taxon>
        <taxon>Solanoideae</taxon>
        <taxon>Solaneae</taxon>
        <taxon>Solanum</taxon>
    </lineage>
</organism>
<sequence>MGFRLSHLSLALSFVALALAGVAIYRNTYEAIIMNNGSLLQNASPHFDSLESGVASILTLNNKKRNSDMYLRQQLTPEACVFSAVRGVVDSAIDAETRMGASLIRLHFHDCFVDGCDGGILLDDINGTFTGEQNSPPNANSARGYEVIAQAKQSVIDTCPNISVSCADILAIAARDSVAKLGGQTYNVALGRSDARTANFTGALTQLPAPFDNLTVQIQKFNDKNFTLREMVALAGAHTVGFARCSTVCTSGNVNPAAQLQCNCSATLTDSDLQQLDTTPTMFDKVYYDNLNNNQGIMFSDQVLTGDATTAGFVTDYSNDVSVFLGDFAAAMIKMGDLPPSAGAQLEIRDVCSRVNPTSVASM</sequence>
<keyword id="KW-0106">Calcium</keyword>
<keyword id="KW-1015">Disulfide bond</keyword>
<keyword id="KW-0325">Glycoprotein</keyword>
<keyword id="KW-0349">Heme</keyword>
<keyword id="KW-0376">Hydrogen peroxide</keyword>
<keyword id="KW-0408">Iron</keyword>
<keyword id="KW-0479">Metal-binding</keyword>
<keyword id="KW-0560">Oxidoreductase</keyword>
<keyword id="KW-0575">Peroxidase</keyword>
<keyword id="KW-1185">Reference proteome</keyword>
<keyword id="KW-0964">Secreted</keyword>
<keyword id="KW-0732">Signal</keyword>
<comment type="function">
    <text>Removal of H(2)O(2), oxidation of toxic reductants, biosynthesis and degradation of lignin, suberization, auxin catabolism, response to environmental stresses such as wounding, pathogen attack and oxidative stress. These functions might be dependent on each isozyme/isoform in each plant tissue.</text>
</comment>
<comment type="function">
    <text>Suggested to catalyze the deposition of the aromatic residues of suberin on the cell wall and thus play a role in cell-suberization.</text>
</comment>
<comment type="catalytic activity">
    <reaction>
        <text>2 a phenolic donor + H2O2 = 2 a phenolic radical donor + 2 H2O</text>
        <dbReference type="Rhea" id="RHEA:56136"/>
        <dbReference type="ChEBI" id="CHEBI:15377"/>
        <dbReference type="ChEBI" id="CHEBI:16240"/>
        <dbReference type="ChEBI" id="CHEBI:139520"/>
        <dbReference type="ChEBI" id="CHEBI:139521"/>
        <dbReference type="EC" id="1.11.1.7"/>
    </reaction>
</comment>
<comment type="cofactor">
    <cofactor>
        <name>Ca(2+)</name>
        <dbReference type="ChEBI" id="CHEBI:29108"/>
    </cofactor>
    <text>Binds 2 calcium ions per subunit.</text>
</comment>
<comment type="cofactor">
    <cofactor>
        <name>heme b</name>
        <dbReference type="ChEBI" id="CHEBI:60344"/>
    </cofactor>
    <text>Binds 1 heme b (iron(II)-protoporphyrin IX) group per subunit.</text>
</comment>
<comment type="subcellular location">
    <subcellularLocation>
        <location evidence="2">Secreted</location>
    </subcellularLocation>
</comment>
<comment type="induction">
    <text>During wound-healing and by factors which induce suberization.</text>
</comment>
<comment type="similarity">
    <text evidence="2">Belongs to the peroxidase family. Classical plant (class III) peroxidase subfamily.</text>
</comment>
<reference key="1">
    <citation type="journal article" date="1988" name="Plant Mol. Biol.">
        <title>Cloning and sequencing of cDNA for a highly anionic peroxidase from potato and the induction of its mRNA in suberizing potato tubers and tomato fruits.</title>
        <authorList>
            <person name="Roberts E."/>
            <person name="Kutchan T."/>
            <person name="Kolattukudy P.E."/>
        </authorList>
        <dbReference type="AGRICOLA" id="IND92000599"/>
    </citation>
    <scope>NUCLEOTIDE SEQUENCE [MRNA] OF 13-363</scope>
    <source>
        <strain>cv. White Rose</strain>
    </source>
</reference>